<accession>A9VU83</accession>
<sequence length="157" mass="17981">MGFPKVERLLINYKTLDEFKKFKGCGAQELSMLEELQANIIENDSESPFYGIYYGGSLIARMSLYMKRNGGEPFEITGTYLELYKLEVLPTFQKQGFGQMLVNYAKQLQFPIKTIARIQSSGFWDKLSFQPVSVTDGDFYIWHPETNSNAITNEESA</sequence>
<dbReference type="EC" id="2.3.1.-" evidence="1"/>
<dbReference type="EMBL" id="CP000903">
    <property type="protein sequence ID" value="ABY44917.1"/>
    <property type="molecule type" value="Genomic_DNA"/>
</dbReference>
<dbReference type="RefSeq" id="WP_002014751.1">
    <property type="nucleotide sequence ID" value="NC_010184.1"/>
</dbReference>
<dbReference type="SMR" id="A9VU83"/>
<dbReference type="KEGG" id="bwe:BcerKBAB4_3748"/>
<dbReference type="eggNOG" id="COG0454">
    <property type="taxonomic scope" value="Bacteria"/>
</dbReference>
<dbReference type="HOGENOM" id="CLU_136634_0_0_9"/>
<dbReference type="Proteomes" id="UP000002154">
    <property type="component" value="Chromosome"/>
</dbReference>
<dbReference type="GO" id="GO:0016747">
    <property type="term" value="F:acyltransferase activity, transferring groups other than amino-acyl groups"/>
    <property type="evidence" value="ECO:0007669"/>
    <property type="project" value="UniProtKB-UniRule"/>
</dbReference>
<dbReference type="CDD" id="cd04301">
    <property type="entry name" value="NAT_SF"/>
    <property type="match status" value="1"/>
</dbReference>
<dbReference type="Gene3D" id="3.40.630.30">
    <property type="match status" value="1"/>
</dbReference>
<dbReference type="HAMAP" id="MF_00824">
    <property type="entry name" value="Acetyltransf_YlbP"/>
    <property type="match status" value="1"/>
</dbReference>
<dbReference type="InterPro" id="IPR016181">
    <property type="entry name" value="Acyl_CoA_acyltransferase"/>
</dbReference>
<dbReference type="InterPro" id="IPR000182">
    <property type="entry name" value="GNAT_dom"/>
</dbReference>
<dbReference type="InterPro" id="IPR017274">
    <property type="entry name" value="YlbP"/>
</dbReference>
<dbReference type="NCBIfam" id="NF010241">
    <property type="entry name" value="PRK13688.1"/>
    <property type="match status" value="1"/>
</dbReference>
<dbReference type="Pfam" id="PF00583">
    <property type="entry name" value="Acetyltransf_1"/>
    <property type="match status" value="1"/>
</dbReference>
<dbReference type="PIRSF" id="PIRSF037732">
    <property type="entry name" value="YlbP_prd"/>
    <property type="match status" value="1"/>
</dbReference>
<dbReference type="SUPFAM" id="SSF55729">
    <property type="entry name" value="Acyl-CoA N-acyltransferases (Nat)"/>
    <property type="match status" value="1"/>
</dbReference>
<gene>
    <name type="ordered locus">BcerKBAB4_3748</name>
</gene>
<feature type="chain" id="PRO_1000134547" description="Uncharacterized N-acetyltransferase BcerKBAB4_3748">
    <location>
        <begin position="1"/>
        <end position="157"/>
    </location>
</feature>
<feature type="domain" description="N-acetyltransferase" evidence="1">
    <location>
        <begin position="9"/>
        <end position="154"/>
    </location>
</feature>
<name>Y3748_BACMK</name>
<proteinExistence type="inferred from homology"/>
<keyword id="KW-0012">Acyltransferase</keyword>
<keyword id="KW-0808">Transferase</keyword>
<organism>
    <name type="scientific">Bacillus mycoides (strain KBAB4)</name>
    <name type="common">Bacillus weihenstephanensis</name>
    <dbReference type="NCBI Taxonomy" id="315730"/>
    <lineage>
        <taxon>Bacteria</taxon>
        <taxon>Bacillati</taxon>
        <taxon>Bacillota</taxon>
        <taxon>Bacilli</taxon>
        <taxon>Bacillales</taxon>
        <taxon>Bacillaceae</taxon>
        <taxon>Bacillus</taxon>
        <taxon>Bacillus cereus group</taxon>
    </lineage>
</organism>
<evidence type="ECO:0000255" key="1">
    <source>
        <dbReference type="HAMAP-Rule" id="MF_00824"/>
    </source>
</evidence>
<protein>
    <recommendedName>
        <fullName evidence="1">Uncharacterized N-acetyltransferase BcerKBAB4_3748</fullName>
        <ecNumber evidence="1">2.3.1.-</ecNumber>
    </recommendedName>
</protein>
<reference key="1">
    <citation type="journal article" date="2008" name="Chem. Biol. Interact.">
        <title>Extending the Bacillus cereus group genomics to putative food-borne pathogens of different toxicity.</title>
        <authorList>
            <person name="Lapidus A."/>
            <person name="Goltsman E."/>
            <person name="Auger S."/>
            <person name="Galleron N."/>
            <person name="Segurens B."/>
            <person name="Dossat C."/>
            <person name="Land M.L."/>
            <person name="Broussolle V."/>
            <person name="Brillard J."/>
            <person name="Guinebretiere M.-H."/>
            <person name="Sanchis V."/>
            <person name="Nguen-the C."/>
            <person name="Lereclus D."/>
            <person name="Richardson P."/>
            <person name="Wincker P."/>
            <person name="Weissenbach J."/>
            <person name="Ehrlich S.D."/>
            <person name="Sorokin A."/>
        </authorList>
    </citation>
    <scope>NUCLEOTIDE SEQUENCE [LARGE SCALE GENOMIC DNA]</scope>
    <source>
        <strain>KBAB4</strain>
    </source>
</reference>